<proteinExistence type="inferred from homology"/>
<reference key="1">
    <citation type="journal article" date="2004" name="Proc. Natl. Acad. Sci. U.S.A.">
        <title>Genome sequence of the deep-sea gamma-proteobacterium Idiomarina loihiensis reveals amino acid fermentation as a source of carbon and energy.</title>
        <authorList>
            <person name="Hou S."/>
            <person name="Saw J.H."/>
            <person name="Lee K.S."/>
            <person name="Freitas T.A."/>
            <person name="Belisle C."/>
            <person name="Kawarabayasi Y."/>
            <person name="Donachie S.P."/>
            <person name="Pikina A."/>
            <person name="Galperin M.Y."/>
            <person name="Koonin E.V."/>
            <person name="Makarova K.S."/>
            <person name="Omelchenko M.V."/>
            <person name="Sorokin A."/>
            <person name="Wolf Y.I."/>
            <person name="Li Q.X."/>
            <person name="Keum Y.S."/>
            <person name="Campbell S."/>
            <person name="Denery J."/>
            <person name="Aizawa S."/>
            <person name="Shibata S."/>
            <person name="Malahoff A."/>
            <person name="Alam M."/>
        </authorList>
    </citation>
    <scope>NUCLEOTIDE SEQUENCE [LARGE SCALE GENOMIC DNA]</scope>
    <source>
        <strain>ATCC BAA-735 / DSM 15497 / L2-TR</strain>
    </source>
</reference>
<feature type="chain" id="PRO_0000133899" description="Enolase">
    <location>
        <begin position="1"/>
        <end position="430"/>
    </location>
</feature>
<feature type="active site" description="Proton donor" evidence="1">
    <location>
        <position position="209"/>
    </location>
</feature>
<feature type="active site" description="Proton acceptor" evidence="1">
    <location>
        <position position="341"/>
    </location>
</feature>
<feature type="binding site" evidence="1">
    <location>
        <position position="167"/>
    </location>
    <ligand>
        <name>(2R)-2-phosphoglycerate</name>
        <dbReference type="ChEBI" id="CHEBI:58289"/>
    </ligand>
</feature>
<feature type="binding site" evidence="1">
    <location>
        <position position="246"/>
    </location>
    <ligand>
        <name>Mg(2+)</name>
        <dbReference type="ChEBI" id="CHEBI:18420"/>
    </ligand>
</feature>
<feature type="binding site" evidence="1">
    <location>
        <position position="289"/>
    </location>
    <ligand>
        <name>Mg(2+)</name>
        <dbReference type="ChEBI" id="CHEBI:18420"/>
    </ligand>
</feature>
<feature type="binding site" evidence="1">
    <location>
        <position position="316"/>
    </location>
    <ligand>
        <name>Mg(2+)</name>
        <dbReference type="ChEBI" id="CHEBI:18420"/>
    </ligand>
</feature>
<feature type="binding site" evidence="1">
    <location>
        <position position="341"/>
    </location>
    <ligand>
        <name>(2R)-2-phosphoglycerate</name>
        <dbReference type="ChEBI" id="CHEBI:58289"/>
    </ligand>
</feature>
<feature type="binding site" evidence="1">
    <location>
        <position position="370"/>
    </location>
    <ligand>
        <name>(2R)-2-phosphoglycerate</name>
        <dbReference type="ChEBI" id="CHEBI:58289"/>
    </ligand>
</feature>
<feature type="binding site" evidence="1">
    <location>
        <position position="371"/>
    </location>
    <ligand>
        <name>(2R)-2-phosphoglycerate</name>
        <dbReference type="ChEBI" id="CHEBI:58289"/>
    </ligand>
</feature>
<feature type="binding site" evidence="1">
    <location>
        <position position="392"/>
    </location>
    <ligand>
        <name>(2R)-2-phosphoglycerate</name>
        <dbReference type="ChEBI" id="CHEBI:58289"/>
    </ligand>
</feature>
<dbReference type="EC" id="4.2.1.11" evidence="1"/>
<dbReference type="EMBL" id="AE017340">
    <property type="protein sequence ID" value="AAV81613.1"/>
    <property type="molecule type" value="Genomic_DNA"/>
</dbReference>
<dbReference type="RefSeq" id="WP_011234024.1">
    <property type="nucleotide sequence ID" value="NC_006512.1"/>
</dbReference>
<dbReference type="SMR" id="Q5R143"/>
<dbReference type="STRING" id="283942.IL0772"/>
<dbReference type="GeneID" id="41335926"/>
<dbReference type="KEGG" id="ilo:IL0772"/>
<dbReference type="eggNOG" id="COG0148">
    <property type="taxonomic scope" value="Bacteria"/>
</dbReference>
<dbReference type="HOGENOM" id="CLU_031223_2_1_6"/>
<dbReference type="OrthoDB" id="9804716at2"/>
<dbReference type="UniPathway" id="UPA00109">
    <property type="reaction ID" value="UER00187"/>
</dbReference>
<dbReference type="Proteomes" id="UP000001171">
    <property type="component" value="Chromosome"/>
</dbReference>
<dbReference type="GO" id="GO:0009986">
    <property type="term" value="C:cell surface"/>
    <property type="evidence" value="ECO:0007669"/>
    <property type="project" value="UniProtKB-SubCell"/>
</dbReference>
<dbReference type="GO" id="GO:0005576">
    <property type="term" value="C:extracellular region"/>
    <property type="evidence" value="ECO:0007669"/>
    <property type="project" value="UniProtKB-SubCell"/>
</dbReference>
<dbReference type="GO" id="GO:0000015">
    <property type="term" value="C:phosphopyruvate hydratase complex"/>
    <property type="evidence" value="ECO:0007669"/>
    <property type="project" value="InterPro"/>
</dbReference>
<dbReference type="GO" id="GO:0000287">
    <property type="term" value="F:magnesium ion binding"/>
    <property type="evidence" value="ECO:0007669"/>
    <property type="project" value="UniProtKB-UniRule"/>
</dbReference>
<dbReference type="GO" id="GO:0004634">
    <property type="term" value="F:phosphopyruvate hydratase activity"/>
    <property type="evidence" value="ECO:0007669"/>
    <property type="project" value="UniProtKB-UniRule"/>
</dbReference>
<dbReference type="GO" id="GO:0006096">
    <property type="term" value="P:glycolytic process"/>
    <property type="evidence" value="ECO:0007669"/>
    <property type="project" value="UniProtKB-UniRule"/>
</dbReference>
<dbReference type="CDD" id="cd03313">
    <property type="entry name" value="enolase"/>
    <property type="match status" value="1"/>
</dbReference>
<dbReference type="FunFam" id="3.20.20.120:FF:000001">
    <property type="entry name" value="Enolase"/>
    <property type="match status" value="1"/>
</dbReference>
<dbReference type="FunFam" id="3.30.390.10:FF:000001">
    <property type="entry name" value="Enolase"/>
    <property type="match status" value="1"/>
</dbReference>
<dbReference type="Gene3D" id="3.20.20.120">
    <property type="entry name" value="Enolase-like C-terminal domain"/>
    <property type="match status" value="1"/>
</dbReference>
<dbReference type="Gene3D" id="3.30.390.10">
    <property type="entry name" value="Enolase-like, N-terminal domain"/>
    <property type="match status" value="1"/>
</dbReference>
<dbReference type="HAMAP" id="MF_00318">
    <property type="entry name" value="Enolase"/>
    <property type="match status" value="1"/>
</dbReference>
<dbReference type="InterPro" id="IPR000941">
    <property type="entry name" value="Enolase"/>
</dbReference>
<dbReference type="InterPro" id="IPR036849">
    <property type="entry name" value="Enolase-like_C_sf"/>
</dbReference>
<dbReference type="InterPro" id="IPR029017">
    <property type="entry name" value="Enolase-like_N"/>
</dbReference>
<dbReference type="InterPro" id="IPR020810">
    <property type="entry name" value="Enolase_C"/>
</dbReference>
<dbReference type="InterPro" id="IPR020809">
    <property type="entry name" value="Enolase_CS"/>
</dbReference>
<dbReference type="InterPro" id="IPR020811">
    <property type="entry name" value="Enolase_N"/>
</dbReference>
<dbReference type="NCBIfam" id="TIGR01060">
    <property type="entry name" value="eno"/>
    <property type="match status" value="1"/>
</dbReference>
<dbReference type="PANTHER" id="PTHR11902">
    <property type="entry name" value="ENOLASE"/>
    <property type="match status" value="1"/>
</dbReference>
<dbReference type="PANTHER" id="PTHR11902:SF1">
    <property type="entry name" value="ENOLASE"/>
    <property type="match status" value="1"/>
</dbReference>
<dbReference type="Pfam" id="PF00113">
    <property type="entry name" value="Enolase_C"/>
    <property type="match status" value="1"/>
</dbReference>
<dbReference type="Pfam" id="PF03952">
    <property type="entry name" value="Enolase_N"/>
    <property type="match status" value="1"/>
</dbReference>
<dbReference type="PIRSF" id="PIRSF001400">
    <property type="entry name" value="Enolase"/>
    <property type="match status" value="1"/>
</dbReference>
<dbReference type="PRINTS" id="PR00148">
    <property type="entry name" value="ENOLASE"/>
</dbReference>
<dbReference type="SFLD" id="SFLDS00001">
    <property type="entry name" value="Enolase"/>
    <property type="match status" value="1"/>
</dbReference>
<dbReference type="SFLD" id="SFLDF00002">
    <property type="entry name" value="enolase"/>
    <property type="match status" value="1"/>
</dbReference>
<dbReference type="SMART" id="SM01192">
    <property type="entry name" value="Enolase_C"/>
    <property type="match status" value="1"/>
</dbReference>
<dbReference type="SMART" id="SM01193">
    <property type="entry name" value="Enolase_N"/>
    <property type="match status" value="1"/>
</dbReference>
<dbReference type="SUPFAM" id="SSF51604">
    <property type="entry name" value="Enolase C-terminal domain-like"/>
    <property type="match status" value="1"/>
</dbReference>
<dbReference type="SUPFAM" id="SSF54826">
    <property type="entry name" value="Enolase N-terminal domain-like"/>
    <property type="match status" value="1"/>
</dbReference>
<dbReference type="PROSITE" id="PS00164">
    <property type="entry name" value="ENOLASE"/>
    <property type="match status" value="1"/>
</dbReference>
<keyword id="KW-0963">Cytoplasm</keyword>
<keyword id="KW-0324">Glycolysis</keyword>
<keyword id="KW-0456">Lyase</keyword>
<keyword id="KW-0460">Magnesium</keyword>
<keyword id="KW-0479">Metal-binding</keyword>
<keyword id="KW-1185">Reference proteome</keyword>
<keyword id="KW-0964">Secreted</keyword>
<gene>
    <name evidence="1" type="primary">eno</name>
    <name type="ordered locus">IL0772</name>
</gene>
<accession>Q5R143</accession>
<protein>
    <recommendedName>
        <fullName evidence="1">Enolase</fullName>
        <ecNumber evidence="1">4.2.1.11</ecNumber>
    </recommendedName>
    <alternativeName>
        <fullName evidence="1">2-phospho-D-glycerate hydro-lyase</fullName>
    </alternativeName>
    <alternativeName>
        <fullName evidence="1">2-phosphoglycerate dehydratase</fullName>
    </alternativeName>
</protein>
<evidence type="ECO:0000255" key="1">
    <source>
        <dbReference type="HAMAP-Rule" id="MF_00318"/>
    </source>
</evidence>
<organism>
    <name type="scientific">Idiomarina loihiensis (strain ATCC BAA-735 / DSM 15497 / L2-TR)</name>
    <dbReference type="NCBI Taxonomy" id="283942"/>
    <lineage>
        <taxon>Bacteria</taxon>
        <taxon>Pseudomonadati</taxon>
        <taxon>Pseudomonadota</taxon>
        <taxon>Gammaproteobacteria</taxon>
        <taxon>Alteromonadales</taxon>
        <taxon>Idiomarinaceae</taxon>
        <taxon>Idiomarina</taxon>
    </lineage>
</organism>
<comment type="function">
    <text evidence="1">Catalyzes the reversible conversion of 2-phosphoglycerate (2-PG) into phosphoenolpyruvate (PEP). It is essential for the degradation of carbohydrates via glycolysis.</text>
</comment>
<comment type="catalytic activity">
    <reaction evidence="1">
        <text>(2R)-2-phosphoglycerate = phosphoenolpyruvate + H2O</text>
        <dbReference type="Rhea" id="RHEA:10164"/>
        <dbReference type="ChEBI" id="CHEBI:15377"/>
        <dbReference type="ChEBI" id="CHEBI:58289"/>
        <dbReference type="ChEBI" id="CHEBI:58702"/>
        <dbReference type="EC" id="4.2.1.11"/>
    </reaction>
</comment>
<comment type="cofactor">
    <cofactor evidence="1">
        <name>Mg(2+)</name>
        <dbReference type="ChEBI" id="CHEBI:18420"/>
    </cofactor>
    <text evidence="1">Binds a second Mg(2+) ion via substrate during catalysis.</text>
</comment>
<comment type="pathway">
    <text evidence="1">Carbohydrate degradation; glycolysis; pyruvate from D-glyceraldehyde 3-phosphate: step 4/5.</text>
</comment>
<comment type="subunit">
    <text evidence="1">Component of the RNA degradosome, a multiprotein complex involved in RNA processing and mRNA degradation.</text>
</comment>
<comment type="subcellular location">
    <subcellularLocation>
        <location evidence="1">Cytoplasm</location>
    </subcellularLocation>
    <subcellularLocation>
        <location evidence="1">Secreted</location>
    </subcellularLocation>
    <subcellularLocation>
        <location evidence="1">Cell surface</location>
    </subcellularLocation>
    <text evidence="1">Fractions of enolase are present in both the cytoplasm and on the cell surface.</text>
</comment>
<comment type="similarity">
    <text evidence="1">Belongs to the enolase family.</text>
</comment>
<name>ENO_IDILO</name>
<sequence>MSKIVKVVGREIMDSRGNPTVEADVYLESGHMGRAAAPSGASTGSREALELRDGDTSRYLGKGVETAVANINGAIAEALSGIDAINQEAVDNIMLRLDGTDNKEKLGANAILAVSLAVAKAAALSKGIELYEHIANLNNTSGKYSMPLPMMNILNGGEHADNNVDIQEFMIQPVGAESFKEGLRMGAEVFHALKKVLQKRGLSTAVGDEGGFAPNLASNEEALQVIVEAVENAGYKMGSDITLALDCAASEFYRDGKYELSGEGKSFTAEEFADYLAELCDRYPIISIEDGLDESDWDGWKVLTEKLGSKVQLVGDDLFVTNTRILKEGIDKSIANSILIKFNQIGSLTETLAAIAMAREAGYSAVISHRSGETEDATIADLAVGTAAGQIKTGSLCRSDRVAKYNQLLRIEGDLNGQAPYRGRQEVNAG</sequence>